<accession>Q9LHA4</accession>
<proteinExistence type="evidence at transcript level"/>
<evidence type="ECO:0000305" key="1"/>
<dbReference type="EMBL" id="AP002057">
    <property type="protein sequence ID" value="BAB03168.1"/>
    <property type="molecule type" value="Genomic_DNA"/>
</dbReference>
<dbReference type="EMBL" id="AP000420">
    <property type="protein sequence ID" value="BAB03168.1"/>
    <property type="status" value="JOINED"/>
    <property type="molecule type" value="Genomic_DNA"/>
</dbReference>
<dbReference type="EMBL" id="CP002686">
    <property type="protein sequence ID" value="AEE77481.1"/>
    <property type="molecule type" value="Genomic_DNA"/>
</dbReference>
<dbReference type="EMBL" id="AF428348">
    <property type="protein sequence ID" value="AAL16278.1"/>
    <property type="molecule type" value="mRNA"/>
</dbReference>
<dbReference type="EMBL" id="AY062635">
    <property type="protein sequence ID" value="AAL32713.1"/>
    <property type="molecule type" value="mRNA"/>
</dbReference>
<dbReference type="EMBL" id="BT000154">
    <property type="protein sequence ID" value="AAN15473.1"/>
    <property type="molecule type" value="mRNA"/>
</dbReference>
<dbReference type="RefSeq" id="NP_189513.1">
    <molecule id="Q9LHA4-1"/>
    <property type="nucleotide sequence ID" value="NM_113792.3"/>
</dbReference>
<dbReference type="SMR" id="Q9LHA4"/>
<dbReference type="BioGRID" id="7832">
    <property type="interactions" value="38"/>
</dbReference>
<dbReference type="FunCoup" id="Q9LHA4">
    <property type="interactions" value="4153"/>
</dbReference>
<dbReference type="IntAct" id="Q9LHA4">
    <property type="interactions" value="12"/>
</dbReference>
<dbReference type="STRING" id="3702.Q9LHA4"/>
<dbReference type="PaxDb" id="3702-AT3G28715.1"/>
<dbReference type="ProteomicsDB" id="242302">
    <molecule id="Q9LHA4-1"/>
</dbReference>
<dbReference type="EnsemblPlants" id="AT3G28715.1">
    <molecule id="Q9LHA4-1"/>
    <property type="protein sequence ID" value="AT3G28715.1"/>
    <property type="gene ID" value="AT3G28715"/>
</dbReference>
<dbReference type="GeneID" id="822503"/>
<dbReference type="Gramene" id="AT3G28715.1">
    <molecule id="Q9LHA4-1"/>
    <property type="protein sequence ID" value="AT3G28715.1"/>
    <property type="gene ID" value="AT3G28715"/>
</dbReference>
<dbReference type="KEGG" id="ath:AT3G28715"/>
<dbReference type="Araport" id="AT3G28715"/>
<dbReference type="TAIR" id="AT3G28715"/>
<dbReference type="eggNOG" id="KOG2957">
    <property type="taxonomic scope" value="Eukaryota"/>
</dbReference>
<dbReference type="InParanoid" id="Q9LHA4"/>
<dbReference type="OMA" id="TKDIMCP"/>
<dbReference type="OrthoDB" id="10250083at2759"/>
<dbReference type="PhylomeDB" id="Q9LHA4"/>
<dbReference type="PRO" id="PR:Q9LHA4"/>
<dbReference type="Proteomes" id="UP000006548">
    <property type="component" value="Chromosome 3"/>
</dbReference>
<dbReference type="ExpressionAtlas" id="Q9LHA4">
    <property type="expression patterns" value="baseline and differential"/>
</dbReference>
<dbReference type="GO" id="GO:0005829">
    <property type="term" value="C:cytosol"/>
    <property type="evidence" value="ECO:0007005"/>
    <property type="project" value="TAIR"/>
</dbReference>
<dbReference type="GO" id="GO:0005794">
    <property type="term" value="C:Golgi apparatus"/>
    <property type="evidence" value="ECO:0007005"/>
    <property type="project" value="TAIR"/>
</dbReference>
<dbReference type="GO" id="GO:0000325">
    <property type="term" value="C:plant-type vacuole"/>
    <property type="evidence" value="ECO:0007005"/>
    <property type="project" value="TAIR"/>
</dbReference>
<dbReference type="GO" id="GO:0009506">
    <property type="term" value="C:plasmodesma"/>
    <property type="evidence" value="ECO:0007005"/>
    <property type="project" value="TAIR"/>
</dbReference>
<dbReference type="GO" id="GO:0033179">
    <property type="term" value="C:proton-transporting V-type ATPase, V0 domain"/>
    <property type="evidence" value="ECO:0007669"/>
    <property type="project" value="InterPro"/>
</dbReference>
<dbReference type="GO" id="GO:0005774">
    <property type="term" value="C:vacuolar membrane"/>
    <property type="evidence" value="ECO:0007669"/>
    <property type="project" value="UniProtKB-SubCell"/>
</dbReference>
<dbReference type="GO" id="GO:0005773">
    <property type="term" value="C:vacuole"/>
    <property type="evidence" value="ECO:0000314"/>
    <property type="project" value="TAIR"/>
</dbReference>
<dbReference type="GO" id="GO:0046961">
    <property type="term" value="F:proton-transporting ATPase activity, rotational mechanism"/>
    <property type="evidence" value="ECO:0007669"/>
    <property type="project" value="InterPro"/>
</dbReference>
<dbReference type="FunFam" id="1.10.132.50:FF:000002">
    <property type="entry name" value="V-type proton ATPase subunit"/>
    <property type="match status" value="1"/>
</dbReference>
<dbReference type="FunFam" id="1.20.1690.10:FF:000001">
    <property type="entry name" value="V-type proton ATPase subunit"/>
    <property type="match status" value="1"/>
</dbReference>
<dbReference type="FunFam" id="1.20.1690.10:FF:000003">
    <property type="entry name" value="V-type proton ATPase subunit"/>
    <property type="match status" value="1"/>
</dbReference>
<dbReference type="Gene3D" id="1.10.132.50">
    <property type="entry name" value="ATP synthase (C/AC39) subunit, domain 3"/>
    <property type="match status" value="1"/>
</dbReference>
<dbReference type="Gene3D" id="1.20.1690.10">
    <property type="entry name" value="V-type ATP synthase subunit C domain"/>
    <property type="match status" value="2"/>
</dbReference>
<dbReference type="InterPro" id="IPR036079">
    <property type="entry name" value="ATPase_csu/dsu_sf"/>
</dbReference>
<dbReference type="InterPro" id="IPR002843">
    <property type="entry name" value="ATPase_V0-cplx_csu/dsu"/>
</dbReference>
<dbReference type="InterPro" id="IPR016727">
    <property type="entry name" value="ATPase_V0-cplx_dsu"/>
</dbReference>
<dbReference type="InterPro" id="IPR035067">
    <property type="entry name" value="V-type_ATPase_csu/dsu"/>
</dbReference>
<dbReference type="InterPro" id="IPR044911">
    <property type="entry name" value="V-type_ATPase_csu/dsu_dom_3"/>
</dbReference>
<dbReference type="PANTHER" id="PTHR11028">
    <property type="entry name" value="VACUOLAR ATP SYNTHASE SUBUNIT AC39"/>
    <property type="match status" value="1"/>
</dbReference>
<dbReference type="Pfam" id="PF01992">
    <property type="entry name" value="vATP-synt_AC39"/>
    <property type="match status" value="1"/>
</dbReference>
<dbReference type="PIRSF" id="PIRSF018497">
    <property type="entry name" value="V-ATP_synth_D"/>
    <property type="match status" value="1"/>
</dbReference>
<dbReference type="SUPFAM" id="SSF103486">
    <property type="entry name" value="V-type ATP synthase subunit C"/>
    <property type="match status" value="1"/>
</dbReference>
<protein>
    <recommendedName>
        <fullName>V-type proton ATPase subunit d2</fullName>
        <shortName>V-ATPase subunit d2</shortName>
    </recommendedName>
    <alternativeName>
        <fullName>Vacuolar H(+)-ATPase subunit d isoform 2</fullName>
    </alternativeName>
    <alternativeName>
        <fullName>Vacuolar proton pump subunit d2</fullName>
    </alternativeName>
</protein>
<keyword id="KW-0025">Alternative splicing</keyword>
<keyword id="KW-0375">Hydrogen ion transport</keyword>
<keyword id="KW-0406">Ion transport</keyword>
<keyword id="KW-0472">Membrane</keyword>
<keyword id="KW-1185">Reference proteome</keyword>
<keyword id="KW-0813">Transport</keyword>
<keyword id="KW-0926">Vacuole</keyword>
<feature type="chain" id="PRO_0000119357" description="V-type proton ATPase subunit d2">
    <location>
        <begin position="1"/>
        <end position="351"/>
    </location>
</feature>
<comment type="function">
    <text>Subunit of the integral membrane V0 complex of vacuolar ATPase. Vacuolar ATPase is responsible for acidifying a variety of intracellular compartments in eukaryotic cells, thus providing most of the energy required for transport processes in the vacuolar system.</text>
</comment>
<comment type="subunit">
    <text>V-ATPase is a heteromultimeric enzyme composed of a peripheral catalytic V1 complex (components A to H) attached to an integral membrane V0 proton pore complex (components: a, c, c'', d and e).</text>
</comment>
<comment type="subcellular location">
    <subcellularLocation>
        <location evidence="1">Vacuole membrane</location>
        <topology evidence="1">Peripheral membrane protein</topology>
    </subcellularLocation>
</comment>
<comment type="alternative products">
    <event type="alternative splicing"/>
    <isoform>
        <id>Q9LHA4-1</id>
        <name>1</name>
        <sequence type="displayed"/>
    </isoform>
    <text>A number of isoforms are produced. According to EST sequences.</text>
</comment>
<comment type="similarity">
    <text evidence="1">Belongs to the V-ATPase V0D/AC39 subunit family.</text>
</comment>
<reference key="1">
    <citation type="journal article" date="2000" name="DNA Res.">
        <title>Structural analysis of Arabidopsis thaliana chromosome 3. II. Sequence features of the 4,251,695 bp regions covered by 90 P1, TAC and BAC clones.</title>
        <authorList>
            <person name="Kaneko T."/>
            <person name="Katoh T."/>
            <person name="Sato S."/>
            <person name="Nakamura Y."/>
            <person name="Asamizu E."/>
            <person name="Tabata S."/>
        </authorList>
    </citation>
    <scope>NUCLEOTIDE SEQUENCE [LARGE SCALE GENOMIC DNA]</scope>
    <source>
        <strain>cv. Columbia</strain>
    </source>
</reference>
<reference key="2">
    <citation type="journal article" date="2000" name="DNA Res.">
        <title>Structural analysis of Arabidopsis thaliana chromosome 3. I. Sequence features of the regions of 4,504,864 bp covered by sixty P1 and TAC clones.</title>
        <authorList>
            <person name="Sato S."/>
            <person name="Nakamura Y."/>
            <person name="Kaneko T."/>
            <person name="Katoh T."/>
            <person name="Asamizu E."/>
            <person name="Tabata S."/>
        </authorList>
    </citation>
    <scope>NUCLEOTIDE SEQUENCE [LARGE SCALE GENOMIC DNA]</scope>
    <source>
        <strain>cv. Columbia</strain>
    </source>
</reference>
<reference key="3">
    <citation type="journal article" date="2017" name="Plant J.">
        <title>Araport11: a complete reannotation of the Arabidopsis thaliana reference genome.</title>
        <authorList>
            <person name="Cheng C.Y."/>
            <person name="Krishnakumar V."/>
            <person name="Chan A.P."/>
            <person name="Thibaud-Nissen F."/>
            <person name="Schobel S."/>
            <person name="Town C.D."/>
        </authorList>
    </citation>
    <scope>GENOME REANNOTATION</scope>
    <source>
        <strain>cv. Columbia</strain>
    </source>
</reference>
<reference key="4">
    <citation type="journal article" date="2003" name="Science">
        <title>Empirical analysis of transcriptional activity in the Arabidopsis genome.</title>
        <authorList>
            <person name="Yamada K."/>
            <person name="Lim J."/>
            <person name="Dale J.M."/>
            <person name="Chen H."/>
            <person name="Shinn P."/>
            <person name="Palm C.J."/>
            <person name="Southwick A.M."/>
            <person name="Wu H.C."/>
            <person name="Kim C.J."/>
            <person name="Nguyen M."/>
            <person name="Pham P.K."/>
            <person name="Cheuk R.F."/>
            <person name="Karlin-Newmann G."/>
            <person name="Liu S.X."/>
            <person name="Lam B."/>
            <person name="Sakano H."/>
            <person name="Wu T."/>
            <person name="Yu G."/>
            <person name="Miranda M."/>
            <person name="Quach H.L."/>
            <person name="Tripp M."/>
            <person name="Chang C.H."/>
            <person name="Lee J.M."/>
            <person name="Toriumi M.J."/>
            <person name="Chan M.M."/>
            <person name="Tang C.C."/>
            <person name="Onodera C.S."/>
            <person name="Deng J.M."/>
            <person name="Akiyama K."/>
            <person name="Ansari Y."/>
            <person name="Arakawa T."/>
            <person name="Banh J."/>
            <person name="Banno F."/>
            <person name="Bowser L."/>
            <person name="Brooks S.Y."/>
            <person name="Carninci P."/>
            <person name="Chao Q."/>
            <person name="Choy N."/>
            <person name="Enju A."/>
            <person name="Goldsmith A.D."/>
            <person name="Gurjal M."/>
            <person name="Hansen N.F."/>
            <person name="Hayashizaki Y."/>
            <person name="Johnson-Hopson C."/>
            <person name="Hsuan V.W."/>
            <person name="Iida K."/>
            <person name="Karnes M."/>
            <person name="Khan S."/>
            <person name="Koesema E."/>
            <person name="Ishida J."/>
            <person name="Jiang P.X."/>
            <person name="Jones T."/>
            <person name="Kawai J."/>
            <person name="Kamiya A."/>
            <person name="Meyers C."/>
            <person name="Nakajima M."/>
            <person name="Narusaka M."/>
            <person name="Seki M."/>
            <person name="Sakurai T."/>
            <person name="Satou M."/>
            <person name="Tamse R."/>
            <person name="Vaysberg M."/>
            <person name="Wallender E.K."/>
            <person name="Wong C."/>
            <person name="Yamamura Y."/>
            <person name="Yuan S."/>
            <person name="Shinozaki K."/>
            <person name="Davis R.W."/>
            <person name="Theologis A."/>
            <person name="Ecker J.R."/>
        </authorList>
    </citation>
    <scope>NUCLEOTIDE SEQUENCE [LARGE SCALE MRNA]</scope>
    <source>
        <strain>cv. Columbia</strain>
    </source>
</reference>
<reference key="5">
    <citation type="journal article" date="2002" name="Trends Plant Sci.">
        <title>A simple nomenclature for a complex proton pump: VHA genes encode the vacuolar H(+)-ATPase.</title>
        <authorList>
            <person name="Sze H."/>
            <person name="Schumacher K."/>
            <person name="Mueller M.L."/>
            <person name="Padmanaban S."/>
            <person name="Taiz L."/>
        </authorList>
    </citation>
    <scope>GENE FAMILY</scope>
    <scope>NOMENCLATURE</scope>
</reference>
<organism>
    <name type="scientific">Arabidopsis thaliana</name>
    <name type="common">Mouse-ear cress</name>
    <dbReference type="NCBI Taxonomy" id="3702"/>
    <lineage>
        <taxon>Eukaryota</taxon>
        <taxon>Viridiplantae</taxon>
        <taxon>Streptophyta</taxon>
        <taxon>Embryophyta</taxon>
        <taxon>Tracheophyta</taxon>
        <taxon>Spermatophyta</taxon>
        <taxon>Magnoliopsida</taxon>
        <taxon>eudicotyledons</taxon>
        <taxon>Gunneridae</taxon>
        <taxon>Pentapetalae</taxon>
        <taxon>rosids</taxon>
        <taxon>malvids</taxon>
        <taxon>Brassicales</taxon>
        <taxon>Brassicaceae</taxon>
        <taxon>Camelineae</taxon>
        <taxon>Arabidopsis</taxon>
    </lineage>
</organism>
<name>VA0D2_ARATH</name>
<sequence length="351" mass="40788">MYGFEALTFNIHGGYLEAIVRGHRAGLLTTADYNNLCQCENLDDIKMHLSATKYGPYLQNEPSPLHTTTIVEKCTLKLVDDYKHMLCQATEPMSTFLEYIRYGHMIDNVVLIVTGTLHERDVQELIEKCHPLGMFDSIATLAVAQNMRELYRLVLVDTPLAPYFSECLTSEDLDDMNIEIMRNTLYKAYLEDFYNFCQKLGGATAEIMSDLLAFEADRRAVNITINSIGTELTREDRKKLYSNFGLLYPYGHEELAICEDIDQVRGVMEKYPPYQAIFSKMSYGESQMLDKAFYEEEVRRLCLAFEQQFHYAVFFAYMRLREQEIRNLMWISECVAQNQKSRIHDSVVYMF</sequence>
<gene>
    <name type="primary">VHA-d2</name>
    <name type="ordered locus">At3g28715</name>
    <name type="ORF">MZN14.22</name>
</gene>